<keyword id="KW-0143">Chaperone</keyword>
<keyword id="KW-0963">Cytoplasm</keyword>
<keyword id="KW-0996">Nickel insertion</keyword>
<proteinExistence type="inferred from homology"/>
<name>URED_STAA2</name>
<feature type="chain" id="PRO_0000346596" description="Urease accessory protein UreD">
    <location>
        <begin position="1"/>
        <end position="278"/>
    </location>
</feature>
<organism>
    <name type="scientific">Staphylococcus aureus (strain JH1)</name>
    <dbReference type="NCBI Taxonomy" id="359787"/>
    <lineage>
        <taxon>Bacteria</taxon>
        <taxon>Bacillati</taxon>
        <taxon>Bacillota</taxon>
        <taxon>Bacilli</taxon>
        <taxon>Bacillales</taxon>
        <taxon>Staphylococcaceae</taxon>
        <taxon>Staphylococcus</taxon>
    </lineage>
</organism>
<evidence type="ECO:0000255" key="1">
    <source>
        <dbReference type="HAMAP-Rule" id="MF_01384"/>
    </source>
</evidence>
<dbReference type="EMBL" id="CP000736">
    <property type="protein sequence ID" value="ABR53186.1"/>
    <property type="molecule type" value="Genomic_DNA"/>
</dbReference>
<dbReference type="SMR" id="A6U418"/>
<dbReference type="KEGG" id="sah:SaurJH1_2361"/>
<dbReference type="HOGENOM" id="CLU_056339_5_0_9"/>
<dbReference type="GO" id="GO:0005737">
    <property type="term" value="C:cytoplasm"/>
    <property type="evidence" value="ECO:0007669"/>
    <property type="project" value="UniProtKB-SubCell"/>
</dbReference>
<dbReference type="GO" id="GO:0016151">
    <property type="term" value="F:nickel cation binding"/>
    <property type="evidence" value="ECO:0007669"/>
    <property type="project" value="UniProtKB-UniRule"/>
</dbReference>
<dbReference type="HAMAP" id="MF_01384">
    <property type="entry name" value="UreD"/>
    <property type="match status" value="1"/>
</dbReference>
<dbReference type="InterPro" id="IPR002669">
    <property type="entry name" value="UreD"/>
</dbReference>
<dbReference type="PANTHER" id="PTHR33643">
    <property type="entry name" value="UREASE ACCESSORY PROTEIN D"/>
    <property type="match status" value="1"/>
</dbReference>
<dbReference type="PANTHER" id="PTHR33643:SF1">
    <property type="entry name" value="UREASE ACCESSORY PROTEIN D"/>
    <property type="match status" value="1"/>
</dbReference>
<dbReference type="Pfam" id="PF01774">
    <property type="entry name" value="UreD"/>
    <property type="match status" value="1"/>
</dbReference>
<sequence>MDEQQWTGQLDLTVFFDGNRSVSRDIFFEKALKVIRPVYLNQSTIPTFYIVNVGGGYLDGDRYRMNVNVEDNAKVTLTSQGATKIYKTPSNHVEQYQTFNLKDNAYLEYVADPIIAYENAKFYQHNTFNLNNSSSLFYTDILTPGYSKTGEAFKYQYMHLINEIYIEDELVTYDNLLLNPNKQSINEIGYMEHYSHYGSAYFIHEDVNQKLIDSVYETISSYSNTFDCRVAISQLPTHGFAVRIFAYRTQIIEKILGTIQSYIAENIYDRKLDFLRKY</sequence>
<accession>A6U418</accession>
<gene>
    <name evidence="1" type="primary">ureD</name>
    <name type="ordered locus">SaurJH1_2361</name>
</gene>
<reference key="1">
    <citation type="submission" date="2007-06" db="EMBL/GenBank/DDBJ databases">
        <title>Complete sequence of chromosome of Staphylococcus aureus subsp. aureus JH1.</title>
        <authorList>
            <consortium name="US DOE Joint Genome Institute"/>
            <person name="Copeland A."/>
            <person name="Lucas S."/>
            <person name="Lapidus A."/>
            <person name="Barry K."/>
            <person name="Detter J.C."/>
            <person name="Glavina del Rio T."/>
            <person name="Hammon N."/>
            <person name="Israni S."/>
            <person name="Dalin E."/>
            <person name="Tice H."/>
            <person name="Pitluck S."/>
            <person name="Chain P."/>
            <person name="Malfatti S."/>
            <person name="Shin M."/>
            <person name="Vergez L."/>
            <person name="Schmutz J."/>
            <person name="Larimer F."/>
            <person name="Land M."/>
            <person name="Hauser L."/>
            <person name="Kyrpides N."/>
            <person name="Ivanova N."/>
            <person name="Tomasz A."/>
            <person name="Richardson P."/>
        </authorList>
    </citation>
    <scope>NUCLEOTIDE SEQUENCE [LARGE SCALE GENOMIC DNA]</scope>
    <source>
        <strain>JH1</strain>
    </source>
</reference>
<protein>
    <recommendedName>
        <fullName evidence="1">Urease accessory protein UreD</fullName>
    </recommendedName>
</protein>
<comment type="function">
    <text evidence="1">Required for maturation of urease via the functional incorporation of the urease nickel metallocenter.</text>
</comment>
<comment type="subunit">
    <text evidence="1">UreD, UreF and UreG form a complex that acts as a GTP-hydrolysis-dependent molecular chaperone, activating the urease apoprotein by helping to assemble the nickel containing metallocenter of UreC. The UreE protein probably delivers the nickel.</text>
</comment>
<comment type="subcellular location">
    <subcellularLocation>
        <location evidence="1">Cytoplasm</location>
    </subcellularLocation>
</comment>
<comment type="similarity">
    <text evidence="1">Belongs to the UreD family.</text>
</comment>